<feature type="chain" id="PRO_0000187608" description="Uroporphyrinogen decarboxylase">
    <location>
        <begin position="1"/>
        <end position="339"/>
    </location>
</feature>
<feature type="binding site" evidence="1">
    <location>
        <begin position="21"/>
        <end position="25"/>
    </location>
    <ligand>
        <name>substrate</name>
    </ligand>
</feature>
<feature type="binding site" evidence="1">
    <location>
        <position position="40"/>
    </location>
    <ligand>
        <name>substrate</name>
    </ligand>
</feature>
<feature type="binding site" evidence="1">
    <location>
        <position position="71"/>
    </location>
    <ligand>
        <name>substrate</name>
    </ligand>
</feature>
<feature type="binding site" evidence="1">
    <location>
        <position position="147"/>
    </location>
    <ligand>
        <name>substrate</name>
    </ligand>
</feature>
<feature type="binding site" evidence="1">
    <location>
        <position position="202"/>
    </location>
    <ligand>
        <name>substrate</name>
    </ligand>
</feature>
<feature type="binding site" evidence="1">
    <location>
        <position position="315"/>
    </location>
    <ligand>
        <name>substrate</name>
    </ligand>
</feature>
<feature type="site" description="Transition state stabilizer" evidence="1">
    <location>
        <position position="71"/>
    </location>
</feature>
<accession>O25325</accession>
<organism>
    <name type="scientific">Helicobacter pylori (strain ATCC 700392 / 26695)</name>
    <name type="common">Campylobacter pylori</name>
    <dbReference type="NCBI Taxonomy" id="85962"/>
    <lineage>
        <taxon>Bacteria</taxon>
        <taxon>Pseudomonadati</taxon>
        <taxon>Campylobacterota</taxon>
        <taxon>Epsilonproteobacteria</taxon>
        <taxon>Campylobacterales</taxon>
        <taxon>Helicobacteraceae</taxon>
        <taxon>Helicobacter</taxon>
    </lineage>
</organism>
<proteinExistence type="inferred from homology"/>
<keyword id="KW-0963">Cytoplasm</keyword>
<keyword id="KW-0210">Decarboxylase</keyword>
<keyword id="KW-0456">Lyase</keyword>
<keyword id="KW-0627">Porphyrin biosynthesis</keyword>
<keyword id="KW-1185">Reference proteome</keyword>
<dbReference type="EC" id="4.1.1.37" evidence="1"/>
<dbReference type="EMBL" id="AE000511">
    <property type="protein sequence ID" value="AAD07669.1"/>
    <property type="status" value="ALT_INIT"/>
    <property type="molecule type" value="Genomic_DNA"/>
</dbReference>
<dbReference type="PIR" id="D64595">
    <property type="entry name" value="D64595"/>
</dbReference>
<dbReference type="RefSeq" id="NP_207399.1">
    <property type="nucleotide sequence ID" value="NC_000915.1"/>
</dbReference>
<dbReference type="RefSeq" id="WP_001863317.1">
    <property type="nucleotide sequence ID" value="NC_018939.1"/>
</dbReference>
<dbReference type="SMR" id="O25325"/>
<dbReference type="FunCoup" id="O25325">
    <property type="interactions" value="353"/>
</dbReference>
<dbReference type="STRING" id="85962.HP_0604"/>
<dbReference type="PaxDb" id="85962-C694_03125"/>
<dbReference type="EnsemblBacteria" id="AAD07669">
    <property type="protein sequence ID" value="AAD07669"/>
    <property type="gene ID" value="HP_0604"/>
</dbReference>
<dbReference type="KEGG" id="heo:C694_03125"/>
<dbReference type="KEGG" id="hpy:HP_0604"/>
<dbReference type="PATRIC" id="fig|85962.47.peg.652"/>
<dbReference type="eggNOG" id="COG0407">
    <property type="taxonomic scope" value="Bacteria"/>
</dbReference>
<dbReference type="InParanoid" id="O25325"/>
<dbReference type="OrthoDB" id="9806656at2"/>
<dbReference type="PhylomeDB" id="O25325"/>
<dbReference type="UniPathway" id="UPA00251">
    <property type="reaction ID" value="UER00321"/>
</dbReference>
<dbReference type="Proteomes" id="UP000000429">
    <property type="component" value="Chromosome"/>
</dbReference>
<dbReference type="GO" id="GO:0005829">
    <property type="term" value="C:cytosol"/>
    <property type="evidence" value="ECO:0000318"/>
    <property type="project" value="GO_Central"/>
</dbReference>
<dbReference type="GO" id="GO:0004853">
    <property type="term" value="F:uroporphyrinogen decarboxylase activity"/>
    <property type="evidence" value="ECO:0000318"/>
    <property type="project" value="GO_Central"/>
</dbReference>
<dbReference type="GO" id="GO:0006783">
    <property type="term" value="P:heme biosynthetic process"/>
    <property type="evidence" value="ECO:0000318"/>
    <property type="project" value="GO_Central"/>
</dbReference>
<dbReference type="GO" id="GO:0019353">
    <property type="term" value="P:protoporphyrinogen IX biosynthetic process from glutamate"/>
    <property type="evidence" value="ECO:0000318"/>
    <property type="project" value="GO_Central"/>
</dbReference>
<dbReference type="CDD" id="cd00717">
    <property type="entry name" value="URO-D"/>
    <property type="match status" value="1"/>
</dbReference>
<dbReference type="FunFam" id="3.20.20.210:FF:000007">
    <property type="entry name" value="Uroporphyrinogen decarboxylase"/>
    <property type="match status" value="1"/>
</dbReference>
<dbReference type="Gene3D" id="3.20.20.210">
    <property type="match status" value="1"/>
</dbReference>
<dbReference type="HAMAP" id="MF_00218">
    <property type="entry name" value="URO_D"/>
    <property type="match status" value="1"/>
</dbReference>
<dbReference type="InterPro" id="IPR038071">
    <property type="entry name" value="UROD/MetE-like_sf"/>
</dbReference>
<dbReference type="InterPro" id="IPR006361">
    <property type="entry name" value="Uroporphyrinogen_deCO2ase_HemE"/>
</dbReference>
<dbReference type="InterPro" id="IPR000257">
    <property type="entry name" value="Uroporphyrinogen_deCOase"/>
</dbReference>
<dbReference type="NCBIfam" id="TIGR01464">
    <property type="entry name" value="hemE"/>
    <property type="match status" value="1"/>
</dbReference>
<dbReference type="PANTHER" id="PTHR21091">
    <property type="entry name" value="METHYLTETRAHYDROFOLATE:HOMOCYSTEINE METHYLTRANSFERASE RELATED"/>
    <property type="match status" value="1"/>
</dbReference>
<dbReference type="PANTHER" id="PTHR21091:SF169">
    <property type="entry name" value="UROPORPHYRINOGEN DECARBOXYLASE"/>
    <property type="match status" value="1"/>
</dbReference>
<dbReference type="Pfam" id="PF01208">
    <property type="entry name" value="URO-D"/>
    <property type="match status" value="1"/>
</dbReference>
<dbReference type="SUPFAM" id="SSF51726">
    <property type="entry name" value="UROD/MetE-like"/>
    <property type="match status" value="1"/>
</dbReference>
<dbReference type="PROSITE" id="PS00906">
    <property type="entry name" value="UROD_1"/>
    <property type="match status" value="1"/>
</dbReference>
<dbReference type="PROSITE" id="PS00907">
    <property type="entry name" value="UROD_2"/>
    <property type="match status" value="1"/>
</dbReference>
<evidence type="ECO:0000255" key="1">
    <source>
        <dbReference type="HAMAP-Rule" id="MF_00218"/>
    </source>
</evidence>
<evidence type="ECO:0000305" key="2"/>
<protein>
    <recommendedName>
        <fullName evidence="1">Uroporphyrinogen decarboxylase</fullName>
        <shortName evidence="1">UPD</shortName>
        <shortName evidence="1">URO-D</shortName>
        <ecNumber evidence="1">4.1.1.37</ecNumber>
    </recommendedName>
</protein>
<comment type="function">
    <text evidence="1">Catalyzes the decarboxylation of four acetate groups of uroporphyrinogen-III to yield coproporphyrinogen-III.</text>
</comment>
<comment type="catalytic activity">
    <reaction evidence="1">
        <text>uroporphyrinogen III + 4 H(+) = coproporphyrinogen III + 4 CO2</text>
        <dbReference type="Rhea" id="RHEA:19865"/>
        <dbReference type="ChEBI" id="CHEBI:15378"/>
        <dbReference type="ChEBI" id="CHEBI:16526"/>
        <dbReference type="ChEBI" id="CHEBI:57308"/>
        <dbReference type="ChEBI" id="CHEBI:57309"/>
        <dbReference type="EC" id="4.1.1.37"/>
    </reaction>
</comment>
<comment type="pathway">
    <text evidence="1">Porphyrin-containing compound metabolism; protoporphyrin-IX biosynthesis; coproporphyrinogen-III from 5-aminolevulinate: step 4/4.</text>
</comment>
<comment type="subunit">
    <text evidence="1">Homodimer.</text>
</comment>
<comment type="subcellular location">
    <subcellularLocation>
        <location evidence="1">Cytoplasm</location>
    </subcellularLocation>
</comment>
<comment type="similarity">
    <text evidence="1">Belongs to the uroporphyrinogen decarboxylase family.</text>
</comment>
<comment type="sequence caution" evidence="2">
    <conflict type="erroneous initiation">
        <sequence resource="EMBL-CDS" id="AAD07669"/>
    </conflict>
</comment>
<gene>
    <name evidence="1" type="primary">hemE</name>
    <name type="ordered locus">HP_0604</name>
</gene>
<sequence>MIFIDACFRKETPYTPIWMMRQAGRYLSEYQESRKKAGSFLELCKNSDLATEVTLQPVEILGVDAAILFSDILVVPLEMGLNLEFIPKKGPHFLETITDLKSVESLKVGAYKQLNYVYDTISQTRQKLSREKALIGFCGSPWTLATYMIEGEGSKSYAKSKKMLYSEPEVLKALLEKLSLELIEYLSLQIQAGVNAVMIFDSWASALEKEAYLKFSWDYLKKISKELKKRYAHIPVILFPKGIGAYLDSIDGEFDVFGVDWGTPLTAAKKILGGKYVLQGNLEPTRLYDKNALEEGVETILKVMGNQGHIFNLGHGMLPDLPRENAKYLVQLVHAKTRR</sequence>
<reference key="1">
    <citation type="journal article" date="1997" name="Nature">
        <title>The complete genome sequence of the gastric pathogen Helicobacter pylori.</title>
        <authorList>
            <person name="Tomb J.-F."/>
            <person name="White O."/>
            <person name="Kerlavage A.R."/>
            <person name="Clayton R.A."/>
            <person name="Sutton G.G."/>
            <person name="Fleischmann R.D."/>
            <person name="Ketchum K.A."/>
            <person name="Klenk H.-P."/>
            <person name="Gill S.R."/>
            <person name="Dougherty B.A."/>
            <person name="Nelson K.E."/>
            <person name="Quackenbush J."/>
            <person name="Zhou L."/>
            <person name="Kirkness E.F."/>
            <person name="Peterson S.N."/>
            <person name="Loftus B.J."/>
            <person name="Richardson D.L."/>
            <person name="Dodson R.J."/>
            <person name="Khalak H.G."/>
            <person name="Glodek A."/>
            <person name="McKenney K."/>
            <person name="FitzGerald L.M."/>
            <person name="Lee N."/>
            <person name="Adams M.D."/>
            <person name="Hickey E.K."/>
            <person name="Berg D.E."/>
            <person name="Gocayne J.D."/>
            <person name="Utterback T.R."/>
            <person name="Peterson J.D."/>
            <person name="Kelley J.M."/>
            <person name="Cotton M.D."/>
            <person name="Weidman J.F."/>
            <person name="Fujii C."/>
            <person name="Bowman C."/>
            <person name="Watthey L."/>
            <person name="Wallin E."/>
            <person name="Hayes W.S."/>
            <person name="Borodovsky M."/>
            <person name="Karp P.D."/>
            <person name="Smith H.O."/>
            <person name="Fraser C.M."/>
            <person name="Venter J.C."/>
        </authorList>
    </citation>
    <scope>NUCLEOTIDE SEQUENCE [LARGE SCALE GENOMIC DNA]</scope>
    <source>
        <strain>ATCC 700392 / 26695</strain>
    </source>
</reference>
<name>DCUP_HELPY</name>